<dbReference type="EMBL" id="Z49211">
    <property type="protein sequence ID" value="CAA89121.1"/>
    <property type="molecule type" value="Genomic_DNA"/>
</dbReference>
<dbReference type="EMBL" id="BK006946">
    <property type="protein sequence ID" value="DAA09917.1"/>
    <property type="molecule type" value="Genomic_DNA"/>
</dbReference>
<dbReference type="PIR" id="S54020">
    <property type="entry name" value="S54020"/>
</dbReference>
<dbReference type="RefSeq" id="NP_013732.1">
    <property type="nucleotide sequence ID" value="NM_001182515.1"/>
</dbReference>
<dbReference type="SMR" id="P50104"/>
<dbReference type="BioGRID" id="35190">
    <property type="interactions" value="140"/>
</dbReference>
<dbReference type="DIP" id="DIP-2487N"/>
<dbReference type="FunCoup" id="P50104">
    <property type="interactions" value="163"/>
</dbReference>
<dbReference type="IntAct" id="P50104">
    <property type="interactions" value="1"/>
</dbReference>
<dbReference type="MINT" id="P50104"/>
<dbReference type="STRING" id="4932.YMR019W"/>
<dbReference type="iPTMnet" id="P50104"/>
<dbReference type="PaxDb" id="4932-YMR019W"/>
<dbReference type="PeptideAtlas" id="P50104"/>
<dbReference type="EnsemblFungi" id="YMR019W_mRNA">
    <property type="protein sequence ID" value="YMR019W"/>
    <property type="gene ID" value="YMR019W"/>
</dbReference>
<dbReference type="GeneID" id="855033"/>
<dbReference type="KEGG" id="sce:YMR019W"/>
<dbReference type="AGR" id="SGD:S000004621"/>
<dbReference type="SGD" id="S000004621">
    <property type="gene designation" value="STB4"/>
</dbReference>
<dbReference type="VEuPathDB" id="FungiDB:YMR019W"/>
<dbReference type="eggNOG" id="ENOG502RBGV">
    <property type="taxonomic scope" value="Eukaryota"/>
</dbReference>
<dbReference type="HOGENOM" id="CLU_012010_0_0_1"/>
<dbReference type="InParanoid" id="P50104"/>
<dbReference type="OMA" id="YDLVLCI"/>
<dbReference type="OrthoDB" id="4064873at2759"/>
<dbReference type="BioCyc" id="YEAST:G3O-32725-MONOMER"/>
<dbReference type="BioGRID-ORCS" id="855033">
    <property type="hits" value="0 hits in 13 CRISPR screens"/>
</dbReference>
<dbReference type="PRO" id="PR:P50104"/>
<dbReference type="Proteomes" id="UP000002311">
    <property type="component" value="Chromosome XIII"/>
</dbReference>
<dbReference type="RNAct" id="P50104">
    <property type="molecule type" value="protein"/>
</dbReference>
<dbReference type="GO" id="GO:0005739">
    <property type="term" value="C:mitochondrion"/>
    <property type="evidence" value="ECO:0007005"/>
    <property type="project" value="SGD"/>
</dbReference>
<dbReference type="GO" id="GO:0005634">
    <property type="term" value="C:nucleus"/>
    <property type="evidence" value="ECO:0000250"/>
    <property type="project" value="SGD"/>
</dbReference>
<dbReference type="GO" id="GO:0003677">
    <property type="term" value="F:DNA binding"/>
    <property type="evidence" value="ECO:0000250"/>
    <property type="project" value="SGD"/>
</dbReference>
<dbReference type="GO" id="GO:0000981">
    <property type="term" value="F:DNA-binding transcription factor activity, RNA polymerase II-specific"/>
    <property type="evidence" value="ECO:0007669"/>
    <property type="project" value="InterPro"/>
</dbReference>
<dbReference type="GO" id="GO:0043565">
    <property type="term" value="F:sequence-specific DNA binding"/>
    <property type="evidence" value="ECO:0007005"/>
    <property type="project" value="SGD"/>
</dbReference>
<dbReference type="GO" id="GO:0008270">
    <property type="term" value="F:zinc ion binding"/>
    <property type="evidence" value="ECO:0007669"/>
    <property type="project" value="InterPro"/>
</dbReference>
<dbReference type="GO" id="GO:0006351">
    <property type="term" value="P:DNA-templated transcription"/>
    <property type="evidence" value="ECO:0007669"/>
    <property type="project" value="InterPro"/>
</dbReference>
<dbReference type="CDD" id="cd12148">
    <property type="entry name" value="fungal_TF_MHR"/>
    <property type="match status" value="1"/>
</dbReference>
<dbReference type="CDD" id="cd00067">
    <property type="entry name" value="GAL4"/>
    <property type="match status" value="1"/>
</dbReference>
<dbReference type="FunFam" id="4.10.240.10:FF:000118">
    <property type="entry name" value="Filamentous growth regulator 27"/>
    <property type="match status" value="1"/>
</dbReference>
<dbReference type="Gene3D" id="4.10.240.10">
    <property type="entry name" value="Zn(2)-C6 fungal-type DNA-binding domain"/>
    <property type="match status" value="1"/>
</dbReference>
<dbReference type="InterPro" id="IPR051615">
    <property type="entry name" value="Transcr_Regulatory_Elem"/>
</dbReference>
<dbReference type="InterPro" id="IPR007219">
    <property type="entry name" value="Transcription_factor_dom_fun"/>
</dbReference>
<dbReference type="InterPro" id="IPR036864">
    <property type="entry name" value="Zn2-C6_fun-type_DNA-bd_sf"/>
</dbReference>
<dbReference type="InterPro" id="IPR001138">
    <property type="entry name" value="Zn2Cys6_DnaBD"/>
</dbReference>
<dbReference type="PANTHER" id="PTHR31313:SF82">
    <property type="entry name" value="ACTIVATORY PROTEIN CHA4-RELATED"/>
    <property type="match status" value="1"/>
</dbReference>
<dbReference type="PANTHER" id="PTHR31313">
    <property type="entry name" value="TY1 ENHANCER ACTIVATOR"/>
    <property type="match status" value="1"/>
</dbReference>
<dbReference type="Pfam" id="PF04082">
    <property type="entry name" value="Fungal_trans"/>
    <property type="match status" value="1"/>
</dbReference>
<dbReference type="Pfam" id="PF00172">
    <property type="entry name" value="Zn_clus"/>
    <property type="match status" value="1"/>
</dbReference>
<dbReference type="SMART" id="SM00906">
    <property type="entry name" value="Fungal_trans"/>
    <property type="match status" value="1"/>
</dbReference>
<dbReference type="SMART" id="SM00066">
    <property type="entry name" value="GAL4"/>
    <property type="match status" value="1"/>
</dbReference>
<dbReference type="SUPFAM" id="SSF57701">
    <property type="entry name" value="Zn2/Cys6 DNA-binding domain"/>
    <property type="match status" value="1"/>
</dbReference>
<dbReference type="PROSITE" id="PS00463">
    <property type="entry name" value="ZN2_CY6_FUNGAL_1"/>
    <property type="match status" value="1"/>
</dbReference>
<dbReference type="PROSITE" id="PS50048">
    <property type="entry name" value="ZN2_CY6_FUNGAL_2"/>
    <property type="match status" value="1"/>
</dbReference>
<feature type="chain" id="PRO_0000114980" description="Probable transcriptional regulatory protein STB4">
    <location>
        <begin position="1"/>
        <end position="949"/>
    </location>
</feature>
<feature type="DNA-binding region" description="Zn(2)-C6 fungal-type" evidence="1">
    <location>
        <begin position="87"/>
        <end position="113"/>
    </location>
</feature>
<feature type="region of interest" description="Disordered" evidence="2">
    <location>
        <begin position="164"/>
        <end position="214"/>
    </location>
</feature>
<feature type="region of interest" description="Disordered" evidence="2">
    <location>
        <begin position="862"/>
        <end position="888"/>
    </location>
</feature>
<feature type="compositionally biased region" description="Low complexity" evidence="2">
    <location>
        <begin position="164"/>
        <end position="178"/>
    </location>
</feature>
<feature type="compositionally biased region" description="Low complexity" evidence="2">
    <location>
        <begin position="200"/>
        <end position="212"/>
    </location>
</feature>
<feature type="compositionally biased region" description="Basic and acidic residues" evidence="2">
    <location>
        <begin position="862"/>
        <end position="874"/>
    </location>
</feature>
<name>STB4_YEAST</name>
<keyword id="KW-0238">DNA-binding</keyword>
<keyword id="KW-0479">Metal-binding</keyword>
<keyword id="KW-0539">Nucleus</keyword>
<keyword id="KW-1185">Reference proteome</keyword>
<keyword id="KW-0804">Transcription</keyword>
<keyword id="KW-0805">Transcription regulation</keyword>
<keyword id="KW-0862">Zinc</keyword>
<comment type="function">
    <text>Binds to SIN3.</text>
</comment>
<comment type="subcellular location">
    <subcellularLocation>
        <location evidence="4">Nucleus</location>
    </subcellularLocation>
</comment>
<comment type="miscellaneous">
    <text evidence="3">Present with 98 molecules/cell in log phase SD medium.</text>
</comment>
<organism>
    <name type="scientific">Saccharomyces cerevisiae (strain ATCC 204508 / S288c)</name>
    <name type="common">Baker's yeast</name>
    <dbReference type="NCBI Taxonomy" id="559292"/>
    <lineage>
        <taxon>Eukaryota</taxon>
        <taxon>Fungi</taxon>
        <taxon>Dikarya</taxon>
        <taxon>Ascomycota</taxon>
        <taxon>Saccharomycotina</taxon>
        <taxon>Saccharomycetes</taxon>
        <taxon>Saccharomycetales</taxon>
        <taxon>Saccharomycetaceae</taxon>
        <taxon>Saccharomyces</taxon>
    </lineage>
</organism>
<sequence>MSINHEIYYILVFEHRSVAIKLIIVVIVLLQFFLARSRQIDRTWAHTNRKERFREMTAIGNTDDALDTSTAASKENGKGRLRVQKACELCKKRKVKCDGNNPCLNCSKHQKECRYDFKATNRKRRRRQVASAVRDVSKTYAETSESFPRDLLSKSNIIINAPSDGVSSSASNSPNPNSHYHHISSTLPFMSGRPNHTFHSGSNLNGENNNNSFPEDHMAKLLLQLSSKLGNTTKESSIRTTRTNASDVNANPTVVNMKNSQEDCDTNHRSAICDSAEALHNNNINSKENKIINSQITNTVNDHFESPWQTFSLDKYRFHRRYQNILPYYLGVSILKDLSPQTIEYAKLKRPRVQNYGWNLSGGHYLKYKGDFRSQEKNIRHESKFFDFDDPVHLSLINKLLRYYFDEINPVFSIIHEATFWQQYNNKFLRQGKQNNSSANLFTSMLYLILSTTLRFREGHLDGQKGQGTYSNTSLNITFEEKSILIKKPSIEENLFKYAYLIINTLTFEWESFELIQSWLLITFYFRTCYRQTACWNALSQAVNMCNGMSLYLNKFPEIHSTYDESKAWHCFWCCFIMDKLISFQMGRFYQLSLPASEMCEQMNLVKSKKFLQEEDDWFHEETFQMLDLSIIVTQFLKRDAQDLNLNETVQLRSQLGQWYDTFIVGSQTNAYDDNYRYFYQVQPFMTYLDIRLTFEVRQLFCLIAPSSTANNKSLEYVVDTELLISHCQMAIENLAEITRSNLFFVPWWLNLSQLFTVNLICIIYLHAGIAVTQNKAIMQSCQEIWRTLECSKPKNRPSMLPECLWCLKMLNHMFCIRLRDSALQLEATLGTDHGDDTPNRNKFEQFKKVGDNDADVEVDAGEREENADERQENPHNNSKRVPLATRSHNTTNFDGSIAISPESAVANLGTDTGLPSDVLDTVSKIGNSPNVFDDDLFSNLLWFDQNFA</sequence>
<reference key="1">
    <citation type="journal article" date="1997" name="Nature">
        <title>The nucleotide sequence of Saccharomyces cerevisiae chromosome XIII.</title>
        <authorList>
            <person name="Bowman S."/>
            <person name="Churcher C.M."/>
            <person name="Badcock K."/>
            <person name="Brown D."/>
            <person name="Chillingworth T."/>
            <person name="Connor R."/>
            <person name="Dedman K."/>
            <person name="Devlin K."/>
            <person name="Gentles S."/>
            <person name="Hamlin N."/>
            <person name="Hunt S."/>
            <person name="Jagels K."/>
            <person name="Lye G."/>
            <person name="Moule S."/>
            <person name="Odell C."/>
            <person name="Pearson D."/>
            <person name="Rajandream M.A."/>
            <person name="Rice P."/>
            <person name="Skelton J."/>
            <person name="Walsh S.V."/>
            <person name="Whitehead S."/>
            <person name="Barrell B.G."/>
        </authorList>
    </citation>
    <scope>NUCLEOTIDE SEQUENCE [LARGE SCALE GENOMIC DNA]</scope>
    <source>
        <strain>ATCC 204508 / S288c</strain>
    </source>
</reference>
<reference key="2">
    <citation type="journal article" date="2014" name="G3 (Bethesda)">
        <title>The reference genome sequence of Saccharomyces cerevisiae: Then and now.</title>
        <authorList>
            <person name="Engel S.R."/>
            <person name="Dietrich F.S."/>
            <person name="Fisk D.G."/>
            <person name="Binkley G."/>
            <person name="Balakrishnan R."/>
            <person name="Costanzo M.C."/>
            <person name="Dwight S.S."/>
            <person name="Hitz B.C."/>
            <person name="Karra K."/>
            <person name="Nash R.S."/>
            <person name="Weng S."/>
            <person name="Wong E.D."/>
            <person name="Lloyd P."/>
            <person name="Skrzypek M.S."/>
            <person name="Miyasato S.R."/>
            <person name="Simison M."/>
            <person name="Cherry J.M."/>
        </authorList>
    </citation>
    <scope>GENOME REANNOTATION</scope>
    <source>
        <strain>ATCC 204508 / S288c</strain>
    </source>
</reference>
<reference key="3">
    <citation type="journal article" date="1997" name="Mol. Gen. Genet.">
        <title>Identification of the Saccharomyces cerevisiae genes STB1-STB5 encoding Sin3p binding proteins.</title>
        <authorList>
            <person name="Kasten M.M."/>
            <person name="Stillman D.J."/>
        </authorList>
    </citation>
    <scope>CHARACTERIZATION</scope>
</reference>
<reference key="4">
    <citation type="journal article" date="2003" name="Nature">
        <title>Global analysis of protein expression in yeast.</title>
        <authorList>
            <person name="Ghaemmaghami S."/>
            <person name="Huh W.-K."/>
            <person name="Bower K."/>
            <person name="Howson R.W."/>
            <person name="Belle A."/>
            <person name="Dephoure N."/>
            <person name="O'Shea E.K."/>
            <person name="Weissman J.S."/>
        </authorList>
    </citation>
    <scope>LEVEL OF PROTEIN EXPRESSION [LARGE SCALE ANALYSIS]</scope>
</reference>
<accession>P50104</accession>
<accession>D6VZJ3</accession>
<protein>
    <recommendedName>
        <fullName>Probable transcriptional regulatory protein STB4</fullName>
    </recommendedName>
</protein>
<proteinExistence type="evidence at protein level"/>
<evidence type="ECO:0000255" key="1">
    <source>
        <dbReference type="PROSITE-ProRule" id="PRU00227"/>
    </source>
</evidence>
<evidence type="ECO:0000256" key="2">
    <source>
        <dbReference type="SAM" id="MobiDB-lite"/>
    </source>
</evidence>
<evidence type="ECO:0000269" key="3">
    <source>
    </source>
</evidence>
<evidence type="ECO:0000305" key="4"/>
<gene>
    <name type="primary">STB4</name>
    <name type="ordered locus">YMR019W</name>
    <name type="ORF">YM9711.08</name>
</gene>